<protein>
    <recommendedName>
        <fullName>DNA polymerase kappa</fullName>
        <ecNumber>2.7.7.7</ecNumber>
    </recommendedName>
    <alternativeName>
        <fullName>Meiotically up-regulated gene 40 protein</fullName>
    </alternativeName>
</protein>
<evidence type="ECO:0000250" key="1"/>
<evidence type="ECO:0000255" key="2">
    <source>
        <dbReference type="PROSITE-ProRule" id="PRU01256"/>
    </source>
</evidence>
<evidence type="ECO:0000256" key="3">
    <source>
        <dbReference type="SAM" id="MobiDB-lite"/>
    </source>
</evidence>
<evidence type="ECO:0000269" key="4">
    <source>
    </source>
</evidence>
<evidence type="ECO:0000269" key="5">
    <source>
    </source>
</evidence>
<dbReference type="EC" id="2.7.7.7"/>
<dbReference type="EMBL" id="CU329672">
    <property type="protein sequence ID" value="CAA19259.2"/>
    <property type="molecule type" value="Genomic_DNA"/>
</dbReference>
<dbReference type="PIR" id="T41397">
    <property type="entry name" value="T41397"/>
</dbReference>
<dbReference type="RefSeq" id="NP_587767.2">
    <property type="nucleotide sequence ID" value="NM_001022760.2"/>
</dbReference>
<dbReference type="SMR" id="O74944"/>
<dbReference type="BioGRID" id="276108">
    <property type="interactions" value="12"/>
</dbReference>
<dbReference type="FunCoup" id="O74944">
    <property type="interactions" value="324"/>
</dbReference>
<dbReference type="STRING" id="284812.O74944"/>
<dbReference type="iPTMnet" id="O74944"/>
<dbReference type="PaxDb" id="4896-SPCC553.07c.1"/>
<dbReference type="EnsemblFungi" id="SPCC553.07c.1">
    <property type="protein sequence ID" value="SPCC553.07c.1:pep"/>
    <property type="gene ID" value="SPCC553.07c"/>
</dbReference>
<dbReference type="GeneID" id="2539547"/>
<dbReference type="KEGG" id="spo:2539547"/>
<dbReference type="PomBase" id="SPCC553.07c"/>
<dbReference type="VEuPathDB" id="FungiDB:SPCC553.07c"/>
<dbReference type="eggNOG" id="KOG2094">
    <property type="taxonomic scope" value="Eukaryota"/>
</dbReference>
<dbReference type="HOGENOM" id="CLU_012348_11_2_1"/>
<dbReference type="InParanoid" id="O74944"/>
<dbReference type="OMA" id="EVYTRQV"/>
<dbReference type="PhylomeDB" id="O74944"/>
<dbReference type="Reactome" id="R-SPO-5655862">
    <property type="pathway name" value="Translesion synthesis by POLK"/>
</dbReference>
<dbReference type="Reactome" id="R-SPO-5656169">
    <property type="pathway name" value="Termination of translesion DNA synthesis"/>
</dbReference>
<dbReference type="Reactome" id="R-SPO-5696397">
    <property type="pathway name" value="Gap-filling DNA repair synthesis and ligation in GG-NER"/>
</dbReference>
<dbReference type="Reactome" id="R-SPO-5696400">
    <property type="pathway name" value="Dual Incision in GG-NER"/>
</dbReference>
<dbReference type="Reactome" id="R-SPO-6782135">
    <property type="pathway name" value="Dual incision in TC-NER"/>
</dbReference>
<dbReference type="Reactome" id="R-SPO-6782210">
    <property type="pathway name" value="Gap-filling DNA repair synthesis and ligation in TC-NER"/>
</dbReference>
<dbReference type="PRO" id="PR:O74944"/>
<dbReference type="Proteomes" id="UP000002485">
    <property type="component" value="Chromosome III"/>
</dbReference>
<dbReference type="GO" id="GO:0000785">
    <property type="term" value="C:chromatin"/>
    <property type="evidence" value="ECO:0000314"/>
    <property type="project" value="PomBase"/>
</dbReference>
<dbReference type="GO" id="GO:0005829">
    <property type="term" value="C:cytosol"/>
    <property type="evidence" value="ECO:0007005"/>
    <property type="project" value="PomBase"/>
</dbReference>
<dbReference type="GO" id="GO:0005634">
    <property type="term" value="C:nucleus"/>
    <property type="evidence" value="ECO:0007005"/>
    <property type="project" value="PomBase"/>
</dbReference>
<dbReference type="GO" id="GO:0003684">
    <property type="term" value="F:damaged DNA binding"/>
    <property type="evidence" value="ECO:0007669"/>
    <property type="project" value="InterPro"/>
</dbReference>
<dbReference type="GO" id="GO:0003887">
    <property type="term" value="F:DNA-directed DNA polymerase activity"/>
    <property type="evidence" value="ECO:0000318"/>
    <property type="project" value="GO_Central"/>
</dbReference>
<dbReference type="GO" id="GO:0008270">
    <property type="term" value="F:zinc ion binding"/>
    <property type="evidence" value="ECO:0007669"/>
    <property type="project" value="UniProtKB-KW"/>
</dbReference>
<dbReference type="GO" id="GO:0006974">
    <property type="term" value="P:DNA damage response"/>
    <property type="evidence" value="ECO:0000315"/>
    <property type="project" value="PomBase"/>
</dbReference>
<dbReference type="GO" id="GO:0006260">
    <property type="term" value="P:DNA replication"/>
    <property type="evidence" value="ECO:0007669"/>
    <property type="project" value="UniProtKB-KW"/>
</dbReference>
<dbReference type="GO" id="GO:0070987">
    <property type="term" value="P:error-free translesion synthesis"/>
    <property type="evidence" value="ECO:0000315"/>
    <property type="project" value="PomBase"/>
</dbReference>
<dbReference type="GO" id="GO:0042276">
    <property type="term" value="P:error-prone translesion synthesis"/>
    <property type="evidence" value="ECO:0000318"/>
    <property type="project" value="GO_Central"/>
</dbReference>
<dbReference type="GO" id="GO:0051321">
    <property type="term" value="P:meiotic cell cycle"/>
    <property type="evidence" value="ECO:0007669"/>
    <property type="project" value="UniProtKB-KW"/>
</dbReference>
<dbReference type="GO" id="GO:0019985">
    <property type="term" value="P:translesion synthesis"/>
    <property type="evidence" value="ECO:0000315"/>
    <property type="project" value="PomBase"/>
</dbReference>
<dbReference type="CDD" id="cd03586">
    <property type="entry name" value="PolY_Pol_IV_kappa"/>
    <property type="match status" value="1"/>
</dbReference>
<dbReference type="FunFam" id="3.30.1490.100:FF:000004">
    <property type="entry name" value="DNA polymerase IV"/>
    <property type="match status" value="1"/>
</dbReference>
<dbReference type="FunFam" id="1.10.150.810:FF:000004">
    <property type="entry name" value="DNA polymerase kappa, putative"/>
    <property type="match status" value="1"/>
</dbReference>
<dbReference type="FunFam" id="3.40.1170.60:FF:000012">
    <property type="entry name" value="Putative DNA-directed polymerase kappa"/>
    <property type="match status" value="1"/>
</dbReference>
<dbReference type="Gene3D" id="1.10.150.810">
    <property type="match status" value="2"/>
</dbReference>
<dbReference type="Gene3D" id="3.30.70.270">
    <property type="match status" value="1"/>
</dbReference>
<dbReference type="Gene3D" id="3.40.1170.60">
    <property type="match status" value="1"/>
</dbReference>
<dbReference type="Gene3D" id="3.30.160.60">
    <property type="entry name" value="Classic Zinc Finger"/>
    <property type="match status" value="1"/>
</dbReference>
<dbReference type="Gene3D" id="3.30.1490.100">
    <property type="entry name" value="DNA polymerase, Y-family, little finger domain"/>
    <property type="match status" value="1"/>
</dbReference>
<dbReference type="HAMAP" id="MF_01113">
    <property type="entry name" value="DNApol_IV"/>
    <property type="match status" value="1"/>
</dbReference>
<dbReference type="InterPro" id="IPR043502">
    <property type="entry name" value="DNA/RNA_pol_sf"/>
</dbReference>
<dbReference type="InterPro" id="IPR036775">
    <property type="entry name" value="DNA_pol_Y-fam_lit_finger_sf"/>
</dbReference>
<dbReference type="InterPro" id="IPR017961">
    <property type="entry name" value="DNA_pol_Y-fam_little_finger"/>
</dbReference>
<dbReference type="InterPro" id="IPR050116">
    <property type="entry name" value="DNA_polymerase-Y"/>
</dbReference>
<dbReference type="InterPro" id="IPR022880">
    <property type="entry name" value="DNApol_IV"/>
</dbReference>
<dbReference type="InterPro" id="IPR006642">
    <property type="entry name" value="Rad18_UBZ4"/>
</dbReference>
<dbReference type="InterPro" id="IPR043128">
    <property type="entry name" value="Rev_trsase/Diguanyl_cyclase"/>
</dbReference>
<dbReference type="InterPro" id="IPR001126">
    <property type="entry name" value="UmuC"/>
</dbReference>
<dbReference type="NCBIfam" id="NF002677">
    <property type="entry name" value="PRK02406.1"/>
    <property type="match status" value="1"/>
</dbReference>
<dbReference type="PANTHER" id="PTHR11076:SF33">
    <property type="entry name" value="DNA POLYMERASE KAPPA"/>
    <property type="match status" value="1"/>
</dbReference>
<dbReference type="PANTHER" id="PTHR11076">
    <property type="entry name" value="DNA REPAIR POLYMERASE UMUC / TRANSFERASE FAMILY MEMBER"/>
    <property type="match status" value="1"/>
</dbReference>
<dbReference type="Pfam" id="PF00817">
    <property type="entry name" value="IMS"/>
    <property type="match status" value="1"/>
</dbReference>
<dbReference type="Pfam" id="PF11799">
    <property type="entry name" value="IMS_C"/>
    <property type="match status" value="1"/>
</dbReference>
<dbReference type="SUPFAM" id="SSF56672">
    <property type="entry name" value="DNA/RNA polymerases"/>
    <property type="match status" value="1"/>
</dbReference>
<dbReference type="SUPFAM" id="SSF100879">
    <property type="entry name" value="Lesion bypass DNA polymerase (Y-family), little finger domain"/>
    <property type="match status" value="1"/>
</dbReference>
<dbReference type="PROSITE" id="PS50173">
    <property type="entry name" value="UMUC"/>
    <property type="match status" value="1"/>
</dbReference>
<dbReference type="PROSITE" id="PS51908">
    <property type="entry name" value="ZF_UBZ4"/>
    <property type="match status" value="1"/>
</dbReference>
<proteinExistence type="evidence at protein level"/>
<accession>O74944</accession>
<organism>
    <name type="scientific">Schizosaccharomyces pombe (strain 972 / ATCC 24843)</name>
    <name type="common">Fission yeast</name>
    <dbReference type="NCBI Taxonomy" id="284812"/>
    <lineage>
        <taxon>Eukaryota</taxon>
        <taxon>Fungi</taxon>
        <taxon>Dikarya</taxon>
        <taxon>Ascomycota</taxon>
        <taxon>Taphrinomycotina</taxon>
        <taxon>Schizosaccharomycetes</taxon>
        <taxon>Schizosaccharomycetales</taxon>
        <taxon>Schizosaccharomycetaceae</taxon>
        <taxon>Schizosaccharomyces</taxon>
    </lineage>
</organism>
<feature type="chain" id="PRO_0000278522" description="DNA polymerase kappa">
    <location>
        <begin position="1"/>
        <end position="547"/>
    </location>
</feature>
<feature type="domain" description="UmuC">
    <location>
        <begin position="132"/>
        <end position="316"/>
    </location>
</feature>
<feature type="zinc finger region" description="UBZ4-type" evidence="2">
    <location>
        <begin position="489"/>
        <end position="518"/>
    </location>
</feature>
<feature type="region of interest" description="Disordered" evidence="3">
    <location>
        <begin position="18"/>
        <end position="39"/>
    </location>
</feature>
<feature type="compositionally biased region" description="Acidic residues" evidence="3">
    <location>
        <begin position="20"/>
        <end position="31"/>
    </location>
</feature>
<feature type="binding site" evidence="1">
    <location>
        <position position="136"/>
    </location>
    <ligand>
        <name>Mg(2+)</name>
        <dbReference type="ChEBI" id="CHEBI:18420"/>
    </ligand>
</feature>
<feature type="binding site" evidence="1">
    <location>
        <position position="226"/>
    </location>
    <ligand>
        <name>Mg(2+)</name>
        <dbReference type="ChEBI" id="CHEBI:18420"/>
    </ligand>
</feature>
<feature type="binding site" evidence="2">
    <location>
        <position position="492"/>
    </location>
    <ligand>
        <name>Zn(2+)</name>
        <dbReference type="ChEBI" id="CHEBI:29105"/>
    </ligand>
</feature>
<feature type="binding site" evidence="2">
    <location>
        <position position="495"/>
    </location>
    <ligand>
        <name>Zn(2+)</name>
        <dbReference type="ChEBI" id="CHEBI:29105"/>
    </ligand>
</feature>
<feature type="binding site" evidence="2">
    <location>
        <position position="509"/>
    </location>
    <ligand>
        <name>Zn(2+)</name>
        <dbReference type="ChEBI" id="CHEBI:29105"/>
    </ligand>
</feature>
<feature type="binding site" evidence="2">
    <location>
        <position position="513"/>
    </location>
    <ligand>
        <name>Zn(2+)</name>
        <dbReference type="ChEBI" id="CHEBI:29105"/>
    </ligand>
</feature>
<gene>
    <name type="primary">mug40</name>
    <name type="ORF">SPCC553.07c</name>
</gene>
<keyword id="KW-0175">Coiled coil</keyword>
<keyword id="KW-0963">Cytoplasm</keyword>
<keyword id="KW-0227">DNA damage</keyword>
<keyword id="KW-0234">DNA repair</keyword>
<keyword id="KW-0235">DNA replication</keyword>
<keyword id="KW-0237">DNA synthesis</keyword>
<keyword id="KW-0238">DNA-binding</keyword>
<keyword id="KW-0239">DNA-directed DNA polymerase</keyword>
<keyword id="KW-0460">Magnesium</keyword>
<keyword id="KW-0469">Meiosis</keyword>
<keyword id="KW-0479">Metal-binding</keyword>
<keyword id="KW-0548">Nucleotidyltransferase</keyword>
<keyword id="KW-0539">Nucleus</keyword>
<keyword id="KW-1185">Reference proteome</keyword>
<keyword id="KW-0808">Transferase</keyword>
<keyword id="KW-0862">Zinc</keyword>
<keyword id="KW-0863">Zinc-finger</keyword>
<name>POLK_SCHPO</name>
<sequence length="547" mass="62055">MENAKDFIGETIKENGLLTIEDDGSSSSDEEATLKRRLAGPSVLKSGQENVNQKKINEIIYEASKGSKFFEAEQKRDRELRLRIEKVQVEVEKYQSKLRFDKAFQREWTIRQESVDTTVEDFRAKRDLTQIIVHVDCDAFYASIEELKNPKLKSLPMAVGKSVLCTANYVARKFGVRSAMPEFIARKICPDLVVIPLNLSEYAIKSKEIQNVLAQYDSNLCPASIDEFYMNLTSHLRLQELAFTVENITMVVEKIRKQVHEETGVTVSCGIAANKLLAKIASNKRKPNNQFFIPFDEIGISKFMNDLPVREVSGIGRVLEQQLLGLEIKTCGDIQRNLVILSYIFLPKSFQNLLRCSYGFGTTILDEYGESKRKTIGSEATFSSNLSSPSIIEYKLRLLVQNVSENLQKRGLVTNSIAIKYKTSEFQVHTKQKSIGQFIHSESDLLKPALQLLRQSYPMTIRLLGVRATKLVSKSRCLAMQLKFQSQNTVPCPVCQKNIENELGILNQHVDLCLNVETVKSLINTDHTANPTIKKRKSNTLDTYFLE</sequence>
<comment type="function">
    <text evidence="4 5">DNA polymerase specifically involved in DNA repair. Plays an important role in translesion synthesis, where the normal high-fidelity DNA polymerases cannot proceed and DNA synthesis stalls. Has a role in meiosis.</text>
</comment>
<comment type="catalytic activity">
    <reaction>
        <text>DNA(n) + a 2'-deoxyribonucleoside 5'-triphosphate = DNA(n+1) + diphosphate</text>
        <dbReference type="Rhea" id="RHEA:22508"/>
        <dbReference type="Rhea" id="RHEA-COMP:17339"/>
        <dbReference type="Rhea" id="RHEA-COMP:17340"/>
        <dbReference type="ChEBI" id="CHEBI:33019"/>
        <dbReference type="ChEBI" id="CHEBI:61560"/>
        <dbReference type="ChEBI" id="CHEBI:173112"/>
        <dbReference type="EC" id="2.7.7.7"/>
    </reaction>
</comment>
<comment type="subunit">
    <text evidence="4">Interacts with hus1 and rad17.</text>
</comment>
<comment type="subcellular location">
    <subcellularLocation>
        <location>Cytoplasm</location>
    </subcellularLocation>
    <subcellularLocation>
        <location>Nucleus</location>
    </subcellularLocation>
    <text>Associates with chromatin.</text>
</comment>
<reference key="1">
    <citation type="journal article" date="2002" name="Nature">
        <title>The genome sequence of Schizosaccharomyces pombe.</title>
        <authorList>
            <person name="Wood V."/>
            <person name="Gwilliam R."/>
            <person name="Rajandream M.A."/>
            <person name="Lyne M.H."/>
            <person name="Lyne R."/>
            <person name="Stewart A."/>
            <person name="Sgouros J.G."/>
            <person name="Peat N."/>
            <person name="Hayles J."/>
            <person name="Baker S.G."/>
            <person name="Basham D."/>
            <person name="Bowman S."/>
            <person name="Brooks K."/>
            <person name="Brown D."/>
            <person name="Brown S."/>
            <person name="Chillingworth T."/>
            <person name="Churcher C.M."/>
            <person name="Collins M."/>
            <person name="Connor R."/>
            <person name="Cronin A."/>
            <person name="Davis P."/>
            <person name="Feltwell T."/>
            <person name="Fraser A."/>
            <person name="Gentles S."/>
            <person name="Goble A."/>
            <person name="Hamlin N."/>
            <person name="Harris D.E."/>
            <person name="Hidalgo J."/>
            <person name="Hodgson G."/>
            <person name="Holroyd S."/>
            <person name="Hornsby T."/>
            <person name="Howarth S."/>
            <person name="Huckle E.J."/>
            <person name="Hunt S."/>
            <person name="Jagels K."/>
            <person name="James K.D."/>
            <person name="Jones L."/>
            <person name="Jones M."/>
            <person name="Leather S."/>
            <person name="McDonald S."/>
            <person name="McLean J."/>
            <person name="Mooney P."/>
            <person name="Moule S."/>
            <person name="Mungall K.L."/>
            <person name="Murphy L.D."/>
            <person name="Niblett D."/>
            <person name="Odell C."/>
            <person name="Oliver K."/>
            <person name="O'Neil S."/>
            <person name="Pearson D."/>
            <person name="Quail M.A."/>
            <person name="Rabbinowitsch E."/>
            <person name="Rutherford K.M."/>
            <person name="Rutter S."/>
            <person name="Saunders D."/>
            <person name="Seeger K."/>
            <person name="Sharp S."/>
            <person name="Skelton J."/>
            <person name="Simmonds M.N."/>
            <person name="Squares R."/>
            <person name="Squares S."/>
            <person name="Stevens K."/>
            <person name="Taylor K."/>
            <person name="Taylor R.G."/>
            <person name="Tivey A."/>
            <person name="Walsh S.V."/>
            <person name="Warren T."/>
            <person name="Whitehead S."/>
            <person name="Woodward J.R."/>
            <person name="Volckaert G."/>
            <person name="Aert R."/>
            <person name="Robben J."/>
            <person name="Grymonprez B."/>
            <person name="Weltjens I."/>
            <person name="Vanstreels E."/>
            <person name="Rieger M."/>
            <person name="Schaefer M."/>
            <person name="Mueller-Auer S."/>
            <person name="Gabel C."/>
            <person name="Fuchs M."/>
            <person name="Duesterhoeft A."/>
            <person name="Fritzc C."/>
            <person name="Holzer E."/>
            <person name="Moestl D."/>
            <person name="Hilbert H."/>
            <person name="Borzym K."/>
            <person name="Langer I."/>
            <person name="Beck A."/>
            <person name="Lehrach H."/>
            <person name="Reinhardt R."/>
            <person name="Pohl T.M."/>
            <person name="Eger P."/>
            <person name="Zimmermann W."/>
            <person name="Wedler H."/>
            <person name="Wambutt R."/>
            <person name="Purnelle B."/>
            <person name="Goffeau A."/>
            <person name="Cadieu E."/>
            <person name="Dreano S."/>
            <person name="Gloux S."/>
            <person name="Lelaure V."/>
            <person name="Mottier S."/>
            <person name="Galibert F."/>
            <person name="Aves S.J."/>
            <person name="Xiang Z."/>
            <person name="Hunt C."/>
            <person name="Moore K."/>
            <person name="Hurst S.M."/>
            <person name="Lucas M."/>
            <person name="Rochet M."/>
            <person name="Gaillardin C."/>
            <person name="Tallada V.A."/>
            <person name="Garzon A."/>
            <person name="Thode G."/>
            <person name="Daga R.R."/>
            <person name="Cruzado L."/>
            <person name="Jimenez J."/>
            <person name="Sanchez M."/>
            <person name="del Rey F."/>
            <person name="Benito J."/>
            <person name="Dominguez A."/>
            <person name="Revuelta J.L."/>
            <person name="Moreno S."/>
            <person name="Armstrong J."/>
            <person name="Forsburg S.L."/>
            <person name="Cerutti L."/>
            <person name="Lowe T."/>
            <person name="McCombie W.R."/>
            <person name="Paulsen I."/>
            <person name="Potashkin J."/>
            <person name="Shpakovski G.V."/>
            <person name="Ussery D."/>
            <person name="Barrell B.G."/>
            <person name="Nurse P."/>
        </authorList>
    </citation>
    <scope>NUCLEOTIDE SEQUENCE [LARGE SCALE GENOMIC DNA]</scope>
    <source>
        <strain>972 / ATCC 24843</strain>
    </source>
</reference>
<reference key="2">
    <citation type="journal article" date="2003" name="Genes Dev.">
        <title>Checkpoint activation regulates mutagenic translesion synthesis.</title>
        <authorList>
            <person name="Kai M."/>
            <person name="Wang T.S.-F."/>
        </authorList>
    </citation>
    <scope>FUNCTION</scope>
    <scope>INTERACTION WITH HUS1 AND RAD17</scope>
    <scope>SUBCELLULAR LOCATION</scope>
</reference>
<reference key="3">
    <citation type="journal article" date="2005" name="Curr. Biol.">
        <title>A large-scale screen in S. pombe identifies seven novel genes required for critical meiotic events.</title>
        <authorList>
            <person name="Martin-Castellanos C."/>
            <person name="Blanco M."/>
            <person name="Rozalen A.E."/>
            <person name="Perez-Hidalgo L."/>
            <person name="Garcia A.I."/>
            <person name="Conde F."/>
            <person name="Mata J."/>
            <person name="Ellermeier C."/>
            <person name="Davis L."/>
            <person name="San-Segundo P."/>
            <person name="Smith G.R."/>
            <person name="Moreno S."/>
        </authorList>
    </citation>
    <scope>FUNCTION IN MEIOSIS</scope>
</reference>
<reference key="4">
    <citation type="journal article" date="2006" name="Nat. Biotechnol.">
        <title>ORFeome cloning and global analysis of protein localization in the fission yeast Schizosaccharomyces pombe.</title>
        <authorList>
            <person name="Matsuyama A."/>
            <person name="Arai R."/>
            <person name="Yashiroda Y."/>
            <person name="Shirai A."/>
            <person name="Kamata A."/>
            <person name="Sekido S."/>
            <person name="Kobayashi Y."/>
            <person name="Hashimoto A."/>
            <person name="Hamamoto M."/>
            <person name="Hiraoka Y."/>
            <person name="Horinouchi S."/>
            <person name="Yoshida M."/>
        </authorList>
    </citation>
    <scope>SUBCELLULAR LOCATION [LARGE SCALE ANALYSIS]</scope>
</reference>